<keyword id="KW-0025">Alternative splicing</keyword>
<keyword id="KW-0256">Endoplasmic reticulum</keyword>
<keyword id="KW-0349">Heme</keyword>
<keyword id="KW-0408">Iron</keyword>
<keyword id="KW-0472">Membrane</keyword>
<keyword id="KW-0479">Metal-binding</keyword>
<keyword id="KW-0492">Microsome</keyword>
<keyword id="KW-0503">Monooxygenase</keyword>
<keyword id="KW-0560">Oxidoreductase</keyword>
<keyword id="KW-0597">Phosphoprotein</keyword>
<keyword id="KW-1267">Proteomics identification</keyword>
<keyword id="KW-1185">Reference proteome</keyword>
<name>CP4B1_HUMAN</name>
<evidence type="ECO:0000250" key="1">
    <source>
        <dbReference type="UniProtKB" id="P20816"/>
    </source>
</evidence>
<evidence type="ECO:0000250" key="2">
    <source>
        <dbReference type="UniProtKB" id="P51869"/>
    </source>
</evidence>
<evidence type="ECO:0000269" key="3">
    <source>
    </source>
</evidence>
<evidence type="ECO:0000269" key="4">
    <source>
    </source>
</evidence>
<evidence type="ECO:0000269" key="5">
    <source ref="5"/>
</evidence>
<evidence type="ECO:0000303" key="6">
    <source>
    </source>
</evidence>
<evidence type="ECO:0000303" key="7">
    <source>
    </source>
</evidence>
<evidence type="ECO:0000305" key="8"/>
<gene>
    <name type="primary">CYP4B1</name>
</gene>
<organism>
    <name type="scientific">Homo sapiens</name>
    <name type="common">Human</name>
    <dbReference type="NCBI Taxonomy" id="9606"/>
    <lineage>
        <taxon>Eukaryota</taxon>
        <taxon>Metazoa</taxon>
        <taxon>Chordata</taxon>
        <taxon>Craniata</taxon>
        <taxon>Vertebrata</taxon>
        <taxon>Euteleostomi</taxon>
        <taxon>Mammalia</taxon>
        <taxon>Eutheria</taxon>
        <taxon>Euarchontoglires</taxon>
        <taxon>Primates</taxon>
        <taxon>Haplorrhini</taxon>
        <taxon>Catarrhini</taxon>
        <taxon>Hominidae</taxon>
        <taxon>Homo</taxon>
    </lineage>
</organism>
<reference key="1">
    <citation type="journal article" date="1989" name="Biochemistry">
        <title>Identification of a new P450 expressed in human lung: complete cDNA sequence, cDNA-directed expression, and chromosome mapping.</title>
        <authorList>
            <person name="Nhamburo P.T."/>
            <person name="Gonzalez F.J."/>
            <person name="McBride O.W."/>
            <person name="Gelboin H.V."/>
            <person name="Kimura S."/>
        </authorList>
    </citation>
    <scope>NUCLEOTIDE SEQUENCE [MRNA] (ISOFORM 1)</scope>
    <source>
        <tissue>Lung</tissue>
    </source>
</reference>
<reference key="2">
    <citation type="journal article" date="1990" name="Eur. J. Biochem.">
        <title>cDNA cloning of cytochrome P-450 related to P-450p-2 from the cDNA library of human placenta. Gene structure and expression.</title>
        <authorList>
            <person name="Yokotani N."/>
            <person name="Sogawa K."/>
            <person name="Matsubara S."/>
            <person name="Gotoh O."/>
            <person name="Kusunose E."/>
            <person name="Kusunose M."/>
            <person name="Fujii-Kuriyama Y."/>
        </authorList>
    </citation>
    <scope>NUCLEOTIDE SEQUENCE [MRNA] (ISOFORM 1)</scope>
    <source>
        <tissue>Placenta</tissue>
    </source>
</reference>
<reference key="3">
    <citation type="journal article" date="2002" name="Pharmacogenetics">
        <title>Genetic polymorphism of the human cytochrome P450 CYP4B1: evidence for a non-functional allelic variant.</title>
        <authorList>
            <person name="Lo-Guidice J.-M."/>
            <person name="Allorge D."/>
            <person name="Cauffiez C."/>
            <person name="Chevalier D."/>
            <person name="Lafitte J.-J."/>
            <person name="Lhermitte M."/>
            <person name="Broly F."/>
        </authorList>
    </citation>
    <scope>NUCLEOTIDE SEQUENCE [MRNA] (ISOFORM 1)</scope>
    <scope>VARIANTS TRP-173; GLY-322; ILE-331; CYS-340 AND CYS-375</scope>
</reference>
<reference key="4">
    <citation type="journal article" date="2003" name="Mol. Pharmacol.">
        <title>Characterization of pulmonary CYP4B2, specific catalyst of methyl oxidation of 3-methylindole.</title>
        <authorList>
            <person name="Carr B.A."/>
            <person name="Ramakanth S."/>
            <person name="Dannan G.A."/>
            <person name="Yost G.S."/>
        </authorList>
    </citation>
    <scope>NUCLEOTIDE SEQUENCE [MRNA] (ISOFORM 2)</scope>
    <scope>TISSUE SPECIFICITY</scope>
    <source>
        <tissue>Lung</tissue>
    </source>
</reference>
<reference key="5">
    <citation type="submission" date="2006-04" db="EMBL/GenBank/DDBJ databases">
        <authorList>
            <consortium name="NIEHS SNPs program"/>
        </authorList>
    </citation>
    <scope>NUCLEOTIDE SEQUENCE [GENOMIC DNA]</scope>
    <scope>VARIANTS VAL-111; TRP-173; TRP-264; GLN-274; GLY-322; SER-329; ILE-331; CYS-340; CYS-354; CYS-375 AND GLN-482</scope>
</reference>
<reference key="6">
    <citation type="journal article" date="2006" name="Nature">
        <title>The DNA sequence and biological annotation of human chromosome 1.</title>
        <authorList>
            <person name="Gregory S.G."/>
            <person name="Barlow K.F."/>
            <person name="McLay K.E."/>
            <person name="Kaul R."/>
            <person name="Swarbreck D."/>
            <person name="Dunham A."/>
            <person name="Scott C.E."/>
            <person name="Howe K.L."/>
            <person name="Woodfine K."/>
            <person name="Spencer C.C.A."/>
            <person name="Jones M.C."/>
            <person name="Gillson C."/>
            <person name="Searle S."/>
            <person name="Zhou Y."/>
            <person name="Kokocinski F."/>
            <person name="McDonald L."/>
            <person name="Evans R."/>
            <person name="Phillips K."/>
            <person name="Atkinson A."/>
            <person name="Cooper R."/>
            <person name="Jones C."/>
            <person name="Hall R.E."/>
            <person name="Andrews T.D."/>
            <person name="Lloyd C."/>
            <person name="Ainscough R."/>
            <person name="Almeida J.P."/>
            <person name="Ambrose K.D."/>
            <person name="Anderson F."/>
            <person name="Andrew R.W."/>
            <person name="Ashwell R.I.S."/>
            <person name="Aubin K."/>
            <person name="Babbage A.K."/>
            <person name="Bagguley C.L."/>
            <person name="Bailey J."/>
            <person name="Beasley H."/>
            <person name="Bethel G."/>
            <person name="Bird C.P."/>
            <person name="Bray-Allen S."/>
            <person name="Brown J.Y."/>
            <person name="Brown A.J."/>
            <person name="Buckley D."/>
            <person name="Burton J."/>
            <person name="Bye J."/>
            <person name="Carder C."/>
            <person name="Chapman J.C."/>
            <person name="Clark S.Y."/>
            <person name="Clarke G."/>
            <person name="Clee C."/>
            <person name="Cobley V."/>
            <person name="Collier R.E."/>
            <person name="Corby N."/>
            <person name="Coville G.J."/>
            <person name="Davies J."/>
            <person name="Deadman R."/>
            <person name="Dunn M."/>
            <person name="Earthrowl M."/>
            <person name="Ellington A.G."/>
            <person name="Errington H."/>
            <person name="Frankish A."/>
            <person name="Frankland J."/>
            <person name="French L."/>
            <person name="Garner P."/>
            <person name="Garnett J."/>
            <person name="Gay L."/>
            <person name="Ghori M.R.J."/>
            <person name="Gibson R."/>
            <person name="Gilby L.M."/>
            <person name="Gillett W."/>
            <person name="Glithero R.J."/>
            <person name="Grafham D.V."/>
            <person name="Griffiths C."/>
            <person name="Griffiths-Jones S."/>
            <person name="Grocock R."/>
            <person name="Hammond S."/>
            <person name="Harrison E.S.I."/>
            <person name="Hart E."/>
            <person name="Haugen E."/>
            <person name="Heath P.D."/>
            <person name="Holmes S."/>
            <person name="Holt K."/>
            <person name="Howden P.J."/>
            <person name="Hunt A.R."/>
            <person name="Hunt S.E."/>
            <person name="Hunter G."/>
            <person name="Isherwood J."/>
            <person name="James R."/>
            <person name="Johnson C."/>
            <person name="Johnson D."/>
            <person name="Joy A."/>
            <person name="Kay M."/>
            <person name="Kershaw J.K."/>
            <person name="Kibukawa M."/>
            <person name="Kimberley A.M."/>
            <person name="King A."/>
            <person name="Knights A.J."/>
            <person name="Lad H."/>
            <person name="Laird G."/>
            <person name="Lawlor S."/>
            <person name="Leongamornlert D.A."/>
            <person name="Lloyd D.M."/>
            <person name="Loveland J."/>
            <person name="Lovell J."/>
            <person name="Lush M.J."/>
            <person name="Lyne R."/>
            <person name="Martin S."/>
            <person name="Mashreghi-Mohammadi M."/>
            <person name="Matthews L."/>
            <person name="Matthews N.S.W."/>
            <person name="McLaren S."/>
            <person name="Milne S."/>
            <person name="Mistry S."/>
            <person name="Moore M.J.F."/>
            <person name="Nickerson T."/>
            <person name="O'Dell C.N."/>
            <person name="Oliver K."/>
            <person name="Palmeiri A."/>
            <person name="Palmer S.A."/>
            <person name="Parker A."/>
            <person name="Patel D."/>
            <person name="Pearce A.V."/>
            <person name="Peck A.I."/>
            <person name="Pelan S."/>
            <person name="Phelps K."/>
            <person name="Phillimore B.J."/>
            <person name="Plumb R."/>
            <person name="Rajan J."/>
            <person name="Raymond C."/>
            <person name="Rouse G."/>
            <person name="Saenphimmachak C."/>
            <person name="Sehra H.K."/>
            <person name="Sheridan E."/>
            <person name="Shownkeen R."/>
            <person name="Sims S."/>
            <person name="Skuce C.D."/>
            <person name="Smith M."/>
            <person name="Steward C."/>
            <person name="Subramanian S."/>
            <person name="Sycamore N."/>
            <person name="Tracey A."/>
            <person name="Tromans A."/>
            <person name="Van Helmond Z."/>
            <person name="Wall M."/>
            <person name="Wallis J.M."/>
            <person name="White S."/>
            <person name="Whitehead S.L."/>
            <person name="Wilkinson J.E."/>
            <person name="Willey D.L."/>
            <person name="Williams H."/>
            <person name="Wilming L."/>
            <person name="Wray P.W."/>
            <person name="Wu Z."/>
            <person name="Coulson A."/>
            <person name="Vaudin M."/>
            <person name="Sulston J.E."/>
            <person name="Durbin R.M."/>
            <person name="Hubbard T."/>
            <person name="Wooster R."/>
            <person name="Dunham I."/>
            <person name="Carter N.P."/>
            <person name="McVean G."/>
            <person name="Ross M.T."/>
            <person name="Harrow J."/>
            <person name="Olson M.V."/>
            <person name="Beck S."/>
            <person name="Rogers J."/>
            <person name="Bentley D.R."/>
        </authorList>
    </citation>
    <scope>NUCLEOTIDE SEQUENCE [LARGE SCALE GENOMIC DNA]</scope>
</reference>
<reference key="7">
    <citation type="journal article" date="2004" name="Genome Res.">
        <title>The status, quality, and expansion of the NIH full-length cDNA project: the Mammalian Gene Collection (MGC).</title>
        <authorList>
            <consortium name="The MGC Project Team"/>
        </authorList>
    </citation>
    <scope>NUCLEOTIDE SEQUENCE [LARGE SCALE MRNA] (ISOFORM 2)</scope>
    <source>
        <tissue>Lung</tissue>
    </source>
</reference>
<proteinExistence type="evidence at protein level"/>
<accession>P13584</accession>
<accession>Q1HBI2</accession>
<accession>Q8TD85</accession>
<accession>Q8WWF2</accession>
<accession>Q8WWU9</accession>
<accession>Q8WWV0</accession>
<protein>
    <recommendedName>
        <fullName>Cytochrome P450 4B1</fullName>
        <ecNumber>1.14.14.1</ecNumber>
    </recommendedName>
    <alternativeName>
        <fullName>CYPIVB1</fullName>
    </alternativeName>
    <alternativeName>
        <fullName>Cytochrome P450-HP</fullName>
    </alternativeName>
</protein>
<sequence>MVPSFLSLSFSSLGLWASGLILVLGFLKLIHLLLRRQTLAKAMDKFPGPPTHWLFGHALEIQETGSLDKVVSWAHQFPYAHPLWFGQFIGFLNIYEPDYAKAVYSRGDPKAPDVYDFFLQWIGRGLLVLEGPKWLQHRKLLTPGFHYDVLKPYVAVFTESTRIMLDKWEEKAREGKSFDIFCDVGHMALNTLMKCTFGRGDTGLGHRDSSYYLAVSDLTLLMQQRLVSFQYHNDFIYWLTPHGRRFLRACQVAHDHTDQVIRERKAALQDEKVRKKIQNRRHLDFLDILLGARDEDDIKLSDADLRAEVDTFMFEGHDTTTSGISWFLYCMALYPEHQHRCREEVREILGDQDFFQWDDLGKMTYLTMCIKESFRLYPPVPQVYRQLSKPVTFVDGRSLPAGSLISMHIYALHRNSAVWPDPEVFDSLRFSTENASKRHPFAFMPFSAGPRNCIGQQFAMSEMKVVTAMCLLRFEFSLDPSRLPIKMPQLVLRSKNGFHLHLKPLGPGSGK</sequence>
<feature type="chain" id="PRO_0000051819" description="Cytochrome P450 4B1">
    <location>
        <begin position="1"/>
        <end position="511"/>
    </location>
</feature>
<feature type="binding site" description="covalent" evidence="2">
    <location>
        <position position="315"/>
    </location>
    <ligand>
        <name>heme</name>
        <dbReference type="ChEBI" id="CHEBI:30413"/>
    </ligand>
</feature>
<feature type="binding site" description="axial binding residue" evidence="2">
    <location>
        <position position="453"/>
    </location>
    <ligand>
        <name>heme</name>
        <dbReference type="ChEBI" id="CHEBI:30413"/>
    </ligand>
    <ligandPart>
        <name>Fe</name>
        <dbReference type="ChEBI" id="CHEBI:18248"/>
    </ligandPart>
</feature>
<feature type="modified residue" description="Phosphoserine" evidence="1">
    <location>
        <position position="436"/>
    </location>
</feature>
<feature type="splice variant" id="VSP_038419" description="In isoform 2." evidence="6 7">
    <original>H</original>
    <variation>HS</variation>
    <location>
        <position position="206"/>
    </location>
</feature>
<feature type="sequence variant" id="VAR_055377" description="In dbSNP:rs45559437." evidence="5">
    <original>A</original>
    <variation>V</variation>
    <location>
        <position position="111"/>
    </location>
</feature>
<feature type="sequence variant" id="VAR_018357" description="In allele CYP4B1*3 and allele CYP4B1*6; dbSNP:rs4646487." evidence="3 5">
    <original>R</original>
    <variation>W</variation>
    <location>
        <position position="173"/>
    </location>
</feature>
<feature type="sequence variant" id="VAR_048453" description="In dbSNP:rs45446505." evidence="5">
    <original>R</original>
    <variation>W</variation>
    <location>
        <position position="264"/>
    </location>
</feature>
<feature type="sequence variant" id="VAR_055378" description="In dbSNP:rs45578838." evidence="5">
    <original>R</original>
    <variation>Q</variation>
    <location>
        <position position="274"/>
    </location>
</feature>
<feature type="sequence variant" id="VAR_018358" description="In allele CYP4B1*4; dbSNP:rs45467195." evidence="3 5">
    <original>S</original>
    <variation>G</variation>
    <location>
        <position position="322"/>
    </location>
</feature>
<feature type="sequence variant" id="VAR_048454" description="In dbSNP:rs12094024." evidence="5">
    <original>Y</original>
    <variation>S</variation>
    <location>
        <position position="329"/>
    </location>
</feature>
<feature type="sequence variant" id="VAR_018359" description="In allele CYP4B1*2, allele CYP4B1*7 and allele CYP4B1*5; dbSNP:rs2297810." evidence="3 5">
    <original>M</original>
    <variation>I</variation>
    <location>
        <position position="331"/>
    </location>
</feature>
<feature type="sequence variant" id="VAR_018360" description="In allele CYP4B1*2 and allele CYP4B1*7; dbSNP:rs4646491." evidence="3 5">
    <original>R</original>
    <variation>C</variation>
    <location>
        <position position="340"/>
    </location>
</feature>
<feature type="sequence variant" id="VAR_018361" description="In allele CYP4B1*6; dbSNP:rs1557501779.">
    <original>V</original>
    <variation>I</variation>
    <location>
        <position position="345"/>
    </location>
</feature>
<feature type="sequence variant" id="VAR_048455" description="In dbSNP:rs17102592." evidence="5">
    <original>F</original>
    <variation>C</variation>
    <location>
        <position position="354"/>
    </location>
</feature>
<feature type="sequence variant" id="VAR_018362" description="In allele CYP4B1*2; dbSNP:rs2297809." evidence="3 5">
    <original>R</original>
    <variation>C</variation>
    <location>
        <position position="375"/>
    </location>
</feature>
<feature type="sequence variant" id="VAR_048456" description="In dbSNP:rs45622937." evidence="5">
    <original>R</original>
    <variation>Q</variation>
    <location>
        <position position="482"/>
    </location>
</feature>
<feature type="sequence conflict" description="In Ref. 1; AAA35712." evidence="8" ref="1">
    <original>Q</original>
    <variation>R</variation>
    <location>
        <position position="37"/>
    </location>
</feature>
<comment type="function">
    <text>Cytochromes P450 are a group of heme-thiolate monooxygenases. In liver microsomes, this enzyme is involved in an NADPH-dependent electron transport pathway. It oxidizes a variety of structurally unrelated compounds, including steroids, fatty acids, and xenobiotics.</text>
</comment>
<comment type="catalytic activity">
    <reaction>
        <text>an organic molecule + reduced [NADPH--hemoprotein reductase] + O2 = an alcohol + oxidized [NADPH--hemoprotein reductase] + H2O + H(+)</text>
        <dbReference type="Rhea" id="RHEA:17149"/>
        <dbReference type="Rhea" id="RHEA-COMP:11964"/>
        <dbReference type="Rhea" id="RHEA-COMP:11965"/>
        <dbReference type="ChEBI" id="CHEBI:15377"/>
        <dbReference type="ChEBI" id="CHEBI:15378"/>
        <dbReference type="ChEBI" id="CHEBI:15379"/>
        <dbReference type="ChEBI" id="CHEBI:30879"/>
        <dbReference type="ChEBI" id="CHEBI:57618"/>
        <dbReference type="ChEBI" id="CHEBI:58210"/>
        <dbReference type="ChEBI" id="CHEBI:142491"/>
        <dbReference type="EC" id="1.14.14.1"/>
    </reaction>
</comment>
<comment type="cofactor">
    <cofactor evidence="2">
        <name>heme</name>
        <dbReference type="ChEBI" id="CHEBI:30413"/>
    </cofactor>
</comment>
<comment type="subcellular location">
    <subcellularLocation>
        <location>Endoplasmic reticulum membrane</location>
        <topology>Peripheral membrane protein</topology>
    </subcellularLocation>
    <subcellularLocation>
        <location>Microsome membrane</location>
        <topology>Peripheral membrane protein</topology>
    </subcellularLocation>
</comment>
<comment type="alternative products">
    <event type="alternative splicing"/>
    <isoform>
        <id>P13584-1</id>
        <name>1</name>
        <sequence type="displayed"/>
    </isoform>
    <isoform>
        <id>P13584-2</id>
        <name>2</name>
        <sequence type="described" ref="VSP_038419"/>
    </isoform>
</comment>
<comment type="tissue specificity">
    <text evidence="4">Detected in the liver and lung (at protein level).</text>
</comment>
<comment type="induction">
    <text>P450 can be induced to high levels in liver and other tissues by various foreign compounds, including drugs, pesticides, and carcinogens.</text>
</comment>
<comment type="similarity">
    <text evidence="8">Belongs to the cytochrome P450 family.</text>
</comment>
<comment type="online information" name="PharmVar Pharmacogen Variation Consortium">
    <link uri="https://www.pharmvar.org/gene/CYP4B1"/>
    <text>CYP4B1 alleles</text>
</comment>
<comment type="online information" name="Atlas of Genetics and Cytogenetics in Oncology and Haematology">
    <link uri="https://atlasgeneticsoncology.org/gene/40253/CYP4B1"/>
</comment>
<dbReference type="EC" id="1.14.14.1"/>
<dbReference type="EMBL" id="J02871">
    <property type="protein sequence ID" value="AAA35712.1"/>
    <property type="molecule type" value="mRNA"/>
</dbReference>
<dbReference type="EMBL" id="X16699">
    <property type="protein sequence ID" value="CAA34672.1"/>
    <property type="molecule type" value="mRNA"/>
</dbReference>
<dbReference type="EMBL" id="AF491285">
    <property type="protein sequence ID" value="AAM09532.1"/>
    <property type="molecule type" value="mRNA"/>
</dbReference>
<dbReference type="EMBL" id="AY064485">
    <property type="protein sequence ID" value="AAL57720.1"/>
    <property type="molecule type" value="mRNA"/>
</dbReference>
<dbReference type="EMBL" id="AY064486">
    <property type="protein sequence ID" value="AAL57721.1"/>
    <property type="molecule type" value="mRNA"/>
</dbReference>
<dbReference type="EMBL" id="AY151048">
    <property type="protein sequence ID" value="AAN72311.1"/>
    <property type="molecule type" value="mRNA"/>
</dbReference>
<dbReference type="EMBL" id="DQ518907">
    <property type="protein sequence ID" value="ABF47106.1"/>
    <property type="molecule type" value="Genomic_DNA"/>
</dbReference>
<dbReference type="EMBL" id="AL593856">
    <property type="status" value="NOT_ANNOTATED_CDS"/>
    <property type="molecule type" value="Genomic_DNA"/>
</dbReference>
<dbReference type="EMBL" id="AL356793">
    <property type="status" value="NOT_ANNOTATED_CDS"/>
    <property type="molecule type" value="Genomic_DNA"/>
</dbReference>
<dbReference type="EMBL" id="BC017758">
    <property type="protein sequence ID" value="AAH17758.1"/>
    <property type="molecule type" value="mRNA"/>
</dbReference>
<dbReference type="CCDS" id="CCDS41328.1">
    <molecule id="P13584-2"/>
</dbReference>
<dbReference type="CCDS" id="CCDS542.1">
    <molecule id="P13584-1"/>
</dbReference>
<dbReference type="PIR" id="S07765">
    <property type="entry name" value="O4HUB1"/>
</dbReference>
<dbReference type="RefSeq" id="NP_000770.2">
    <molecule id="P13584-1"/>
    <property type="nucleotide sequence ID" value="NM_000779.4"/>
</dbReference>
<dbReference type="RefSeq" id="NP_001093242.1">
    <molecule id="P13584-2"/>
    <property type="nucleotide sequence ID" value="NM_001099772.2"/>
</dbReference>
<dbReference type="SMR" id="P13584"/>
<dbReference type="BioGRID" id="107952">
    <property type="interactions" value="5"/>
</dbReference>
<dbReference type="FunCoup" id="P13584">
    <property type="interactions" value="212"/>
</dbReference>
<dbReference type="IntAct" id="P13584">
    <property type="interactions" value="1"/>
</dbReference>
<dbReference type="STRING" id="9606.ENSP00000360991"/>
<dbReference type="BindingDB" id="P13584"/>
<dbReference type="ChEMBL" id="CHEMBL4523986"/>
<dbReference type="DrugBank" id="DB01174">
    <property type="generic name" value="Phenobarbital"/>
</dbReference>
<dbReference type="DrugBank" id="DB00152">
    <property type="generic name" value="Thiamine"/>
</dbReference>
<dbReference type="iPTMnet" id="P13584"/>
<dbReference type="PhosphoSitePlus" id="P13584"/>
<dbReference type="BioMuta" id="CYP4B1"/>
<dbReference type="DMDM" id="48429213"/>
<dbReference type="jPOST" id="P13584"/>
<dbReference type="MassIVE" id="P13584"/>
<dbReference type="PaxDb" id="9606-ENSP00000360991"/>
<dbReference type="PeptideAtlas" id="P13584"/>
<dbReference type="ProteomicsDB" id="52929">
    <molecule id="P13584-1"/>
</dbReference>
<dbReference type="ProteomicsDB" id="52930">
    <molecule id="P13584-2"/>
</dbReference>
<dbReference type="Antibodypedia" id="981">
    <property type="antibodies" value="162 antibodies from 30 providers"/>
</dbReference>
<dbReference type="DNASU" id="1580"/>
<dbReference type="Ensembl" id="ENST00000271153.8">
    <molecule id="P13584-1"/>
    <property type="protein sequence ID" value="ENSP00000271153.4"/>
    <property type="gene ID" value="ENSG00000142973.16"/>
</dbReference>
<dbReference type="Ensembl" id="ENST00000371923.9">
    <molecule id="P13584-2"/>
    <property type="protein sequence ID" value="ENSP00000360991.4"/>
    <property type="gene ID" value="ENSG00000142973.16"/>
</dbReference>
<dbReference type="GeneID" id="1580"/>
<dbReference type="KEGG" id="hsa:1580"/>
<dbReference type="MANE-Select" id="ENST00000371923.9">
    <molecule id="P13584-2"/>
    <property type="protein sequence ID" value="ENSP00000360991.4"/>
    <property type="RefSeq nucleotide sequence ID" value="NM_001099772.2"/>
    <property type="RefSeq protein sequence ID" value="NP_001093242.1"/>
</dbReference>
<dbReference type="UCSC" id="uc001cqm.5">
    <molecule id="P13584-1"/>
    <property type="organism name" value="human"/>
</dbReference>
<dbReference type="AGR" id="HGNC:2644"/>
<dbReference type="CTD" id="1580"/>
<dbReference type="DisGeNET" id="1580"/>
<dbReference type="GeneCards" id="CYP4B1"/>
<dbReference type="HGNC" id="HGNC:2644">
    <property type="gene designation" value="CYP4B1"/>
</dbReference>
<dbReference type="HPA" id="ENSG00000142973">
    <property type="expression patterns" value="Tissue enhanced (lung)"/>
</dbReference>
<dbReference type="MIM" id="124075">
    <property type="type" value="gene"/>
</dbReference>
<dbReference type="neXtProt" id="NX_P13584"/>
<dbReference type="OpenTargets" id="ENSG00000142973"/>
<dbReference type="PharmGKB" id="PA27119"/>
<dbReference type="VEuPathDB" id="HostDB:ENSG00000142973"/>
<dbReference type="eggNOG" id="KOG0157">
    <property type="taxonomic scope" value="Eukaryota"/>
</dbReference>
<dbReference type="GeneTree" id="ENSGT00940000161441"/>
<dbReference type="InParanoid" id="P13584"/>
<dbReference type="OMA" id="IQPAFRL"/>
<dbReference type="OrthoDB" id="1470350at2759"/>
<dbReference type="PAN-GO" id="P13584">
    <property type="GO annotations" value="0 GO annotations based on evolutionary models"/>
</dbReference>
<dbReference type="PhylomeDB" id="P13584"/>
<dbReference type="TreeFam" id="TF105088"/>
<dbReference type="PathwayCommons" id="P13584"/>
<dbReference type="Reactome" id="R-HSA-211935">
    <property type="pathway name" value="Fatty acids"/>
</dbReference>
<dbReference type="Reactome" id="R-HSA-211958">
    <property type="pathway name" value="Miscellaneous substrates"/>
</dbReference>
<dbReference type="Reactome" id="R-HSA-211979">
    <property type="pathway name" value="Eicosanoids"/>
</dbReference>
<dbReference type="Reactome" id="R-HSA-2142691">
    <property type="pathway name" value="Synthesis of Leukotrienes (LT) and Eoxins (EX)"/>
</dbReference>
<dbReference type="SignaLink" id="P13584"/>
<dbReference type="BioGRID-ORCS" id="1580">
    <property type="hits" value="34 hits in 1148 CRISPR screens"/>
</dbReference>
<dbReference type="ChiTaRS" id="CYP4B1">
    <property type="organism name" value="human"/>
</dbReference>
<dbReference type="GeneWiki" id="CYP4B1"/>
<dbReference type="GenomeRNAi" id="1580"/>
<dbReference type="Pharos" id="P13584">
    <property type="development level" value="Tbio"/>
</dbReference>
<dbReference type="PRO" id="PR:P13584"/>
<dbReference type="Proteomes" id="UP000005640">
    <property type="component" value="Chromosome 1"/>
</dbReference>
<dbReference type="RNAct" id="P13584">
    <property type="molecule type" value="protein"/>
</dbReference>
<dbReference type="Bgee" id="ENSG00000142973">
    <property type="expression patterns" value="Expressed in bronchial epithelial cell and 160 other cell types or tissues"/>
</dbReference>
<dbReference type="ExpressionAtlas" id="P13584">
    <property type="expression patterns" value="baseline and differential"/>
</dbReference>
<dbReference type="GO" id="GO:0005789">
    <property type="term" value="C:endoplasmic reticulum membrane"/>
    <property type="evidence" value="ECO:0000304"/>
    <property type="project" value="Reactome"/>
</dbReference>
<dbReference type="GO" id="GO:0020037">
    <property type="term" value="F:heme binding"/>
    <property type="evidence" value="ECO:0007669"/>
    <property type="project" value="InterPro"/>
</dbReference>
<dbReference type="GO" id="GO:1901363">
    <property type="term" value="F:heterocyclic compound binding"/>
    <property type="evidence" value="ECO:0007669"/>
    <property type="project" value="Ensembl"/>
</dbReference>
<dbReference type="GO" id="GO:0005506">
    <property type="term" value="F:iron ion binding"/>
    <property type="evidence" value="ECO:0007669"/>
    <property type="project" value="InterPro"/>
</dbReference>
<dbReference type="GO" id="GO:0004497">
    <property type="term" value="F:monooxygenase activity"/>
    <property type="evidence" value="ECO:0000304"/>
    <property type="project" value="Reactome"/>
</dbReference>
<dbReference type="GO" id="GO:0016712">
    <property type="term" value="F:oxidoreductase activity, acting on paired donors, with incorporation or reduction of molecular oxygen, reduced flavin or flavoprotein as one donor, and incorporation of one atom of oxygen"/>
    <property type="evidence" value="ECO:0007669"/>
    <property type="project" value="UniProtKB-EC"/>
</dbReference>
<dbReference type="GO" id="GO:0019825">
    <property type="term" value="F:oxygen binding"/>
    <property type="evidence" value="ECO:0000304"/>
    <property type="project" value="ProtInc"/>
</dbReference>
<dbReference type="GO" id="GO:0018879">
    <property type="term" value="P:biphenyl metabolic process"/>
    <property type="evidence" value="ECO:0007669"/>
    <property type="project" value="Ensembl"/>
</dbReference>
<dbReference type="GO" id="GO:0006631">
    <property type="term" value="P:fatty acid metabolic process"/>
    <property type="evidence" value="ECO:0000304"/>
    <property type="project" value="Reactome"/>
</dbReference>
<dbReference type="CDD" id="cd20678">
    <property type="entry name" value="CYP4B-like"/>
    <property type="match status" value="1"/>
</dbReference>
<dbReference type="FunFam" id="1.10.630.10:FF:000005">
    <property type="entry name" value="cytochrome P450 4F22 isoform X2"/>
    <property type="match status" value="1"/>
</dbReference>
<dbReference type="Gene3D" id="1.10.630.10">
    <property type="entry name" value="Cytochrome P450"/>
    <property type="match status" value="1"/>
</dbReference>
<dbReference type="InterPro" id="IPR001128">
    <property type="entry name" value="Cyt_P450"/>
</dbReference>
<dbReference type="InterPro" id="IPR017972">
    <property type="entry name" value="Cyt_P450_CS"/>
</dbReference>
<dbReference type="InterPro" id="IPR002401">
    <property type="entry name" value="Cyt_P450_E_grp-I"/>
</dbReference>
<dbReference type="InterPro" id="IPR036396">
    <property type="entry name" value="Cyt_P450_sf"/>
</dbReference>
<dbReference type="InterPro" id="IPR050196">
    <property type="entry name" value="Cytochrome_P450_Monoox"/>
</dbReference>
<dbReference type="PANTHER" id="PTHR24291:SF149">
    <property type="entry name" value="CYTOCHROME P450 4B1"/>
    <property type="match status" value="1"/>
</dbReference>
<dbReference type="PANTHER" id="PTHR24291">
    <property type="entry name" value="CYTOCHROME P450 FAMILY 4"/>
    <property type="match status" value="1"/>
</dbReference>
<dbReference type="Pfam" id="PF00067">
    <property type="entry name" value="p450"/>
    <property type="match status" value="1"/>
</dbReference>
<dbReference type="PRINTS" id="PR00463">
    <property type="entry name" value="EP450I"/>
</dbReference>
<dbReference type="PRINTS" id="PR00385">
    <property type="entry name" value="P450"/>
</dbReference>
<dbReference type="SUPFAM" id="SSF48264">
    <property type="entry name" value="Cytochrome P450"/>
    <property type="match status" value="1"/>
</dbReference>
<dbReference type="PROSITE" id="PS00086">
    <property type="entry name" value="CYTOCHROME_P450"/>
    <property type="match status" value="1"/>
</dbReference>